<name>URE3_CHESB</name>
<evidence type="ECO:0000255" key="1">
    <source>
        <dbReference type="HAMAP-Rule" id="MF_00739"/>
    </source>
</evidence>
<feature type="chain" id="PRO_1000046334" description="Urease subunit gamma">
    <location>
        <begin position="1"/>
        <end position="100"/>
    </location>
</feature>
<gene>
    <name evidence="1" type="primary">ureA</name>
    <name type="ordered locus">Meso_2681</name>
</gene>
<sequence>MNLTPREKDKLLIAMAAIVARRRLERGVKLNHPEAVALITDFVVEGARDGRPVAELMEAGAHVITRDQVMEGVAEMIHDIQVEATFPDGTKLVTVHEPIR</sequence>
<comment type="catalytic activity">
    <reaction evidence="1">
        <text>urea + 2 H2O + H(+) = hydrogencarbonate + 2 NH4(+)</text>
        <dbReference type="Rhea" id="RHEA:20557"/>
        <dbReference type="ChEBI" id="CHEBI:15377"/>
        <dbReference type="ChEBI" id="CHEBI:15378"/>
        <dbReference type="ChEBI" id="CHEBI:16199"/>
        <dbReference type="ChEBI" id="CHEBI:17544"/>
        <dbReference type="ChEBI" id="CHEBI:28938"/>
        <dbReference type="EC" id="3.5.1.5"/>
    </reaction>
</comment>
<comment type="pathway">
    <text evidence="1">Nitrogen metabolism; urea degradation; CO(2) and NH(3) from urea (urease route): step 1/1.</text>
</comment>
<comment type="subunit">
    <text evidence="1">Heterotrimer of UreA (gamma), UreB (beta) and UreC (alpha) subunits. Three heterotrimers associate to form the active enzyme.</text>
</comment>
<comment type="subcellular location">
    <subcellularLocation>
        <location evidence="1">Cytoplasm</location>
    </subcellularLocation>
</comment>
<comment type="similarity">
    <text evidence="1">Belongs to the urease gamma subunit family.</text>
</comment>
<accession>Q11EW7</accession>
<reference key="1">
    <citation type="submission" date="2006-06" db="EMBL/GenBank/DDBJ databases">
        <title>Complete sequence of chromosome of Mesorhizobium sp. BNC1.</title>
        <authorList>
            <consortium name="US DOE Joint Genome Institute"/>
            <person name="Copeland A."/>
            <person name="Lucas S."/>
            <person name="Lapidus A."/>
            <person name="Barry K."/>
            <person name="Detter J.C."/>
            <person name="Glavina del Rio T."/>
            <person name="Hammon N."/>
            <person name="Israni S."/>
            <person name="Dalin E."/>
            <person name="Tice H."/>
            <person name="Pitluck S."/>
            <person name="Chertkov O."/>
            <person name="Brettin T."/>
            <person name="Bruce D."/>
            <person name="Han C."/>
            <person name="Tapia R."/>
            <person name="Gilna P."/>
            <person name="Schmutz J."/>
            <person name="Larimer F."/>
            <person name="Land M."/>
            <person name="Hauser L."/>
            <person name="Kyrpides N."/>
            <person name="Mikhailova N."/>
            <person name="Richardson P."/>
        </authorList>
    </citation>
    <scope>NUCLEOTIDE SEQUENCE [LARGE SCALE GENOMIC DNA]</scope>
    <source>
        <strain>BNC1</strain>
    </source>
</reference>
<organism>
    <name type="scientific">Chelativorans sp. (strain BNC1)</name>
    <dbReference type="NCBI Taxonomy" id="266779"/>
    <lineage>
        <taxon>Bacteria</taxon>
        <taxon>Pseudomonadati</taxon>
        <taxon>Pseudomonadota</taxon>
        <taxon>Alphaproteobacteria</taxon>
        <taxon>Hyphomicrobiales</taxon>
        <taxon>Phyllobacteriaceae</taxon>
        <taxon>Chelativorans</taxon>
    </lineage>
</organism>
<protein>
    <recommendedName>
        <fullName evidence="1">Urease subunit gamma</fullName>
        <ecNumber evidence="1">3.5.1.5</ecNumber>
    </recommendedName>
    <alternativeName>
        <fullName evidence="1">Urea amidohydrolase subunit gamma</fullName>
    </alternativeName>
</protein>
<proteinExistence type="inferred from homology"/>
<keyword id="KW-0963">Cytoplasm</keyword>
<keyword id="KW-0378">Hydrolase</keyword>
<dbReference type="EC" id="3.5.1.5" evidence="1"/>
<dbReference type="EMBL" id="CP000390">
    <property type="protein sequence ID" value="ABG64058.1"/>
    <property type="molecule type" value="Genomic_DNA"/>
</dbReference>
<dbReference type="SMR" id="Q11EW7"/>
<dbReference type="STRING" id="266779.Meso_2681"/>
<dbReference type="KEGG" id="mes:Meso_2681"/>
<dbReference type="eggNOG" id="COG0831">
    <property type="taxonomic scope" value="Bacteria"/>
</dbReference>
<dbReference type="HOGENOM" id="CLU_145825_1_0_5"/>
<dbReference type="OrthoDB" id="9797217at2"/>
<dbReference type="UniPathway" id="UPA00258">
    <property type="reaction ID" value="UER00370"/>
</dbReference>
<dbReference type="GO" id="GO:0005737">
    <property type="term" value="C:cytoplasm"/>
    <property type="evidence" value="ECO:0007669"/>
    <property type="project" value="UniProtKB-SubCell"/>
</dbReference>
<dbReference type="GO" id="GO:0016151">
    <property type="term" value="F:nickel cation binding"/>
    <property type="evidence" value="ECO:0007669"/>
    <property type="project" value="InterPro"/>
</dbReference>
<dbReference type="GO" id="GO:0009039">
    <property type="term" value="F:urease activity"/>
    <property type="evidence" value="ECO:0007669"/>
    <property type="project" value="UniProtKB-UniRule"/>
</dbReference>
<dbReference type="GO" id="GO:0043419">
    <property type="term" value="P:urea catabolic process"/>
    <property type="evidence" value="ECO:0007669"/>
    <property type="project" value="UniProtKB-UniRule"/>
</dbReference>
<dbReference type="CDD" id="cd00390">
    <property type="entry name" value="Urease_gamma"/>
    <property type="match status" value="1"/>
</dbReference>
<dbReference type="Gene3D" id="3.30.280.10">
    <property type="entry name" value="Urease, gamma-like subunit"/>
    <property type="match status" value="1"/>
</dbReference>
<dbReference type="HAMAP" id="MF_00739">
    <property type="entry name" value="Urease_gamma"/>
    <property type="match status" value="1"/>
</dbReference>
<dbReference type="InterPro" id="IPR012010">
    <property type="entry name" value="Urease_gamma"/>
</dbReference>
<dbReference type="InterPro" id="IPR002026">
    <property type="entry name" value="Urease_gamma/gamma-beta_su"/>
</dbReference>
<dbReference type="InterPro" id="IPR036463">
    <property type="entry name" value="Urease_gamma_sf"/>
</dbReference>
<dbReference type="InterPro" id="IPR050069">
    <property type="entry name" value="Urease_subunit"/>
</dbReference>
<dbReference type="NCBIfam" id="NF009712">
    <property type="entry name" value="PRK13241.1"/>
    <property type="match status" value="1"/>
</dbReference>
<dbReference type="NCBIfam" id="TIGR00193">
    <property type="entry name" value="urease_gam"/>
    <property type="match status" value="1"/>
</dbReference>
<dbReference type="PANTHER" id="PTHR33569">
    <property type="entry name" value="UREASE"/>
    <property type="match status" value="1"/>
</dbReference>
<dbReference type="PANTHER" id="PTHR33569:SF1">
    <property type="entry name" value="UREASE"/>
    <property type="match status" value="1"/>
</dbReference>
<dbReference type="Pfam" id="PF00547">
    <property type="entry name" value="Urease_gamma"/>
    <property type="match status" value="1"/>
</dbReference>
<dbReference type="PIRSF" id="PIRSF001223">
    <property type="entry name" value="Urease_gamma"/>
    <property type="match status" value="1"/>
</dbReference>
<dbReference type="SUPFAM" id="SSF54111">
    <property type="entry name" value="Urease, gamma-subunit"/>
    <property type="match status" value="1"/>
</dbReference>